<sequence>MIKAVLIDIEGTVSPISFVKEVLFPYSKERIEEFIKKNLDNPDIKRIIQDIKNIEGRDLTLEEVVNTLIRWIDQDKKITPLKEIQGYIWEEGFRSGRLKAPVYEDAYRKLKEWKEKNIPMYIYSSGSVKAQKLFFSHTEYGDLTGFFSGFFDTKTGNKKDPQSYLKIAEAVGLKPENILFLSDNPDEIRAAAEAGMKVIKISRPEDSPYIDNFPYRQVDSFDQITDL</sequence>
<protein>
    <recommendedName>
        <fullName evidence="1">Enolase-phosphatase E1</fullName>
        <ecNumber evidence="1">3.1.3.77</ecNumber>
    </recommendedName>
    <alternativeName>
        <fullName evidence="1">2,3-diketo-5-methylthio-1-phosphopentane phosphatase</fullName>
    </alternativeName>
</protein>
<proteinExistence type="inferred from homology"/>
<keyword id="KW-0028">Amino-acid biosynthesis</keyword>
<keyword id="KW-0378">Hydrolase</keyword>
<keyword id="KW-0460">Magnesium</keyword>
<keyword id="KW-0479">Metal-binding</keyword>
<keyword id="KW-0486">Methionine biosynthesis</keyword>
<keyword id="KW-1185">Reference proteome</keyword>
<feature type="chain" id="PRO_1000187391" description="Enolase-phosphatase E1">
    <location>
        <begin position="1"/>
        <end position="227"/>
    </location>
</feature>
<gene>
    <name evidence="1" type="primary">mtnC</name>
    <name type="ordered locus">PERMA_0829</name>
</gene>
<comment type="function">
    <text evidence="1">Bifunctional enzyme that catalyzes the enolization of 2,3-diketo-5-methylthiopentyl-1-phosphate (DK-MTP-1-P) into the intermediate 2-hydroxy-3-keto-5-methylthiopentenyl-1-phosphate (HK-MTPenyl-1-P), which is then dephosphorylated to form the acireductone 1,2-dihydroxy-3-keto-5-methylthiopentene (DHK-MTPene).</text>
</comment>
<comment type="catalytic activity">
    <reaction evidence="1">
        <text>5-methylsulfanyl-2,3-dioxopentyl phosphate + H2O = 1,2-dihydroxy-5-(methylsulfanyl)pent-1-en-3-one + phosphate</text>
        <dbReference type="Rhea" id="RHEA:21700"/>
        <dbReference type="ChEBI" id="CHEBI:15377"/>
        <dbReference type="ChEBI" id="CHEBI:43474"/>
        <dbReference type="ChEBI" id="CHEBI:49252"/>
        <dbReference type="ChEBI" id="CHEBI:58828"/>
        <dbReference type="EC" id="3.1.3.77"/>
    </reaction>
</comment>
<comment type="cofactor">
    <cofactor evidence="1">
        <name>Mg(2+)</name>
        <dbReference type="ChEBI" id="CHEBI:18420"/>
    </cofactor>
    <text evidence="1">Binds 1 Mg(2+) ion per subunit.</text>
</comment>
<comment type="pathway">
    <text evidence="1">Amino-acid biosynthesis; L-methionine biosynthesis via salvage pathway; L-methionine from S-methyl-5-thio-alpha-D-ribose 1-phosphate: step 3/6.</text>
</comment>
<comment type="pathway">
    <text evidence="1">Amino-acid biosynthesis; L-methionine biosynthesis via salvage pathway; L-methionine from S-methyl-5-thio-alpha-D-ribose 1-phosphate: step 4/6.</text>
</comment>
<comment type="subunit">
    <text evidence="1">Monomer.</text>
</comment>
<comment type="similarity">
    <text evidence="1">Belongs to the HAD-like hydrolase superfamily. MasA/MtnC family.</text>
</comment>
<accession>C0QPL9</accession>
<dbReference type="EC" id="3.1.3.77" evidence="1"/>
<dbReference type="EMBL" id="CP001230">
    <property type="protein sequence ID" value="ACO03465.1"/>
    <property type="molecule type" value="Genomic_DNA"/>
</dbReference>
<dbReference type="RefSeq" id="WP_012675704.1">
    <property type="nucleotide sequence ID" value="NC_012440.1"/>
</dbReference>
<dbReference type="SMR" id="C0QPL9"/>
<dbReference type="STRING" id="123214.PERMA_0829"/>
<dbReference type="PaxDb" id="123214-PERMA_0829"/>
<dbReference type="KEGG" id="pmx:PERMA_0829"/>
<dbReference type="eggNOG" id="COG4229">
    <property type="taxonomic scope" value="Bacteria"/>
</dbReference>
<dbReference type="HOGENOM" id="CLU_023273_0_0_0"/>
<dbReference type="OrthoDB" id="9809962at2"/>
<dbReference type="UniPathway" id="UPA00904">
    <property type="reaction ID" value="UER00876"/>
</dbReference>
<dbReference type="UniPathway" id="UPA00904">
    <property type="reaction ID" value="UER00877"/>
</dbReference>
<dbReference type="Proteomes" id="UP000001366">
    <property type="component" value="Chromosome"/>
</dbReference>
<dbReference type="GO" id="GO:0043715">
    <property type="term" value="F:2,3-diketo-5-methylthiopentyl-1-phosphate enolase activity"/>
    <property type="evidence" value="ECO:0007669"/>
    <property type="project" value="UniProtKB-UniRule"/>
</dbReference>
<dbReference type="GO" id="GO:0043716">
    <property type="term" value="F:2-hydroxy-3-keto-5-methylthiopentenyl-1-phosphate phosphatase activity"/>
    <property type="evidence" value="ECO:0007669"/>
    <property type="project" value="UniProtKB-UniRule"/>
</dbReference>
<dbReference type="GO" id="GO:0043874">
    <property type="term" value="F:acireductone synthase activity"/>
    <property type="evidence" value="ECO:0007669"/>
    <property type="project" value="UniProtKB-EC"/>
</dbReference>
<dbReference type="GO" id="GO:0000287">
    <property type="term" value="F:magnesium ion binding"/>
    <property type="evidence" value="ECO:0007669"/>
    <property type="project" value="UniProtKB-UniRule"/>
</dbReference>
<dbReference type="GO" id="GO:0019509">
    <property type="term" value="P:L-methionine salvage from methylthioadenosine"/>
    <property type="evidence" value="ECO:0007669"/>
    <property type="project" value="UniProtKB-UniRule"/>
</dbReference>
<dbReference type="CDD" id="cd01629">
    <property type="entry name" value="HAD_EP"/>
    <property type="match status" value="1"/>
</dbReference>
<dbReference type="FunFam" id="3.40.50.1000:FF:000079">
    <property type="entry name" value="Enolase-phosphatase E1"/>
    <property type="match status" value="1"/>
</dbReference>
<dbReference type="Gene3D" id="1.10.720.60">
    <property type="match status" value="1"/>
</dbReference>
<dbReference type="Gene3D" id="3.40.50.1000">
    <property type="entry name" value="HAD superfamily/HAD-like"/>
    <property type="match status" value="1"/>
</dbReference>
<dbReference type="HAMAP" id="MF_01681">
    <property type="entry name" value="Salvage_MtnC"/>
    <property type="match status" value="1"/>
</dbReference>
<dbReference type="InterPro" id="IPR023943">
    <property type="entry name" value="Enolase-ppase_E1"/>
</dbReference>
<dbReference type="InterPro" id="IPR036412">
    <property type="entry name" value="HAD-like_sf"/>
</dbReference>
<dbReference type="InterPro" id="IPR006439">
    <property type="entry name" value="HAD-SF_hydro_IA"/>
</dbReference>
<dbReference type="InterPro" id="IPR023214">
    <property type="entry name" value="HAD_sf"/>
</dbReference>
<dbReference type="NCBIfam" id="TIGR01691">
    <property type="entry name" value="enolase-ppase"/>
    <property type="match status" value="1"/>
</dbReference>
<dbReference type="NCBIfam" id="TIGR01549">
    <property type="entry name" value="HAD-SF-IA-v1"/>
    <property type="match status" value="1"/>
</dbReference>
<dbReference type="NCBIfam" id="TIGR01509">
    <property type="entry name" value="HAD-SF-IA-v3"/>
    <property type="match status" value="1"/>
</dbReference>
<dbReference type="PANTHER" id="PTHR20371">
    <property type="entry name" value="ENOLASE-PHOSPHATASE E1"/>
    <property type="match status" value="1"/>
</dbReference>
<dbReference type="PANTHER" id="PTHR20371:SF1">
    <property type="entry name" value="ENOLASE-PHOSPHATASE E1"/>
    <property type="match status" value="1"/>
</dbReference>
<dbReference type="Pfam" id="PF00702">
    <property type="entry name" value="Hydrolase"/>
    <property type="match status" value="1"/>
</dbReference>
<dbReference type="PRINTS" id="PR00413">
    <property type="entry name" value="HADHALOGNASE"/>
</dbReference>
<dbReference type="SFLD" id="SFLDG01129">
    <property type="entry name" value="C1.5:_HAD__Beta-PGM__Phosphata"/>
    <property type="match status" value="1"/>
</dbReference>
<dbReference type="SFLD" id="SFLDF00044">
    <property type="entry name" value="enolase-phosphatase"/>
    <property type="match status" value="1"/>
</dbReference>
<dbReference type="SUPFAM" id="SSF56784">
    <property type="entry name" value="HAD-like"/>
    <property type="match status" value="1"/>
</dbReference>
<name>MTNC_PERMH</name>
<reference key="1">
    <citation type="journal article" date="2009" name="J. Bacteriol.">
        <title>Complete and draft genome sequences of six members of the Aquificales.</title>
        <authorList>
            <person name="Reysenbach A.-L."/>
            <person name="Hamamura N."/>
            <person name="Podar M."/>
            <person name="Griffiths E."/>
            <person name="Ferreira S."/>
            <person name="Hochstein R."/>
            <person name="Heidelberg J."/>
            <person name="Johnson J."/>
            <person name="Mead D."/>
            <person name="Pohorille A."/>
            <person name="Sarmiento M."/>
            <person name="Schweighofer K."/>
            <person name="Seshadri R."/>
            <person name="Voytek M.A."/>
        </authorList>
    </citation>
    <scope>NUCLEOTIDE SEQUENCE [LARGE SCALE GENOMIC DNA]</scope>
    <source>
        <strain>DSM 14350 / EX-H1</strain>
    </source>
</reference>
<evidence type="ECO:0000255" key="1">
    <source>
        <dbReference type="HAMAP-Rule" id="MF_01681"/>
    </source>
</evidence>
<organism>
    <name type="scientific">Persephonella marina (strain DSM 14350 / EX-H1)</name>
    <dbReference type="NCBI Taxonomy" id="123214"/>
    <lineage>
        <taxon>Bacteria</taxon>
        <taxon>Pseudomonadati</taxon>
        <taxon>Aquificota</taxon>
        <taxon>Aquificia</taxon>
        <taxon>Aquificales</taxon>
        <taxon>Hydrogenothermaceae</taxon>
        <taxon>Persephonella</taxon>
    </lineage>
</organism>